<sequence>MRTSPRRPLILKRRRLPLPVQNAPSETSEEEAKRSPAQPEPAPAQASQEVAESSSCKFPAGIKIINHPTTPNTQVVAIPSNADIQSIITALTAKGKESGTSGPNRFILISSGGPSSHPSQPQAHSSRDSKRAEVITETLGPKPAAKGVPVPKPPGAPPRQRQESYAGGEAAGCTLDNSLTNIQWLGKMSSDGLGPCSVKQELEEKENCHLEQNRVKVEEPSGVSTSWQDSVSERPPYSYMAMIQFAINSTERKRMTLKDIYTWIEDHFPYFKHIAKPGWKNSIRHNLSLHDMFVRETSANGKVSFWTIHPSANRHLTLDQVFKPLEPGSPQSPEHLESQQKRPNPELHRNVTIKTEIPLGARRKMKPLLPRVSSYLEPIQFPVNQSLVLQPSVKVPFRLAASLMSSELARHSKRVRIAPKVLLSSEGIAPLPATEPPKEEKPLLGGEGLLPLLPIQSIKEEEMQPEEDIAHLERPIKVESPPLEEWPSPCASLKEELSNSWEDSSCSPTPKPKKSYCGLKSPTRCVSEMLVTKRREKREVSRSRRKQHLQPPCLDEPDLFFPEDSSTFRPAVELLAESSEPAPHLSCPQEEGGPFKTPIKETLPVSSTPSKSVLSRDPESWRLTPPAKVGGLDFSPVRTPQGAFGLLPDSLGLMELNTTPLKSGPLFDSPRELLNSEPFDLASDPFGSPPPPHVEGPKPGSPELQIPSLSANRSLTEGLVLDTMNDSLSKILLDISFPGLEEDPLGPDNINWSQFIPELR</sequence>
<evidence type="ECO:0000250" key="1">
    <source>
        <dbReference type="UniProtKB" id="Q08050"/>
    </source>
</evidence>
<evidence type="ECO:0000255" key="2">
    <source>
        <dbReference type="PROSITE-ProRule" id="PRU00089"/>
    </source>
</evidence>
<evidence type="ECO:0000256" key="3">
    <source>
        <dbReference type="SAM" id="MobiDB-lite"/>
    </source>
</evidence>
<evidence type="ECO:0000269" key="4">
    <source>
    </source>
</evidence>
<evidence type="ECO:0000305" key="5"/>
<proteinExistence type="evidence at protein level"/>
<dbReference type="EMBL" id="Y11245">
    <property type="protein sequence ID" value="CAA72115.1"/>
    <property type="status" value="ALT_SEQ"/>
    <property type="molecule type" value="mRNA"/>
</dbReference>
<dbReference type="SMR" id="O08696"/>
<dbReference type="CORUM" id="O08696"/>
<dbReference type="FunCoup" id="O08696">
    <property type="interactions" value="1354"/>
</dbReference>
<dbReference type="IntAct" id="O08696">
    <property type="interactions" value="2"/>
</dbReference>
<dbReference type="MINT" id="O08696"/>
<dbReference type="STRING" id="10090.ENSMUSP00000073041"/>
<dbReference type="GlyGen" id="O08696">
    <property type="glycosylation" value="2 sites, 1 O-linked glycan (1 site)"/>
</dbReference>
<dbReference type="iPTMnet" id="O08696"/>
<dbReference type="PhosphoSitePlus" id="O08696"/>
<dbReference type="jPOST" id="O08696"/>
<dbReference type="PaxDb" id="10090-ENSMUSP00000073041"/>
<dbReference type="ProteomicsDB" id="271797"/>
<dbReference type="AGR" id="MGI:1347487"/>
<dbReference type="MGI" id="MGI:1347487">
    <property type="gene designation" value="Foxm1"/>
</dbReference>
<dbReference type="eggNOG" id="KOG2294">
    <property type="taxonomic scope" value="Eukaryota"/>
</dbReference>
<dbReference type="InParanoid" id="O08696"/>
<dbReference type="PhylomeDB" id="O08696"/>
<dbReference type="Reactome" id="R-MMU-156711">
    <property type="pathway name" value="Polo-like kinase mediated events"/>
</dbReference>
<dbReference type="Reactome" id="R-MMU-69273">
    <property type="pathway name" value="Cyclin A/B1/B2 associated events during G2/M transition"/>
</dbReference>
<dbReference type="ChiTaRS" id="Foxm1">
    <property type="organism name" value="mouse"/>
</dbReference>
<dbReference type="PRO" id="PR:O08696"/>
<dbReference type="Proteomes" id="UP000000589">
    <property type="component" value="Unplaced"/>
</dbReference>
<dbReference type="RNAct" id="O08696">
    <property type="molecule type" value="protein"/>
</dbReference>
<dbReference type="GO" id="GO:0005634">
    <property type="term" value="C:nucleus"/>
    <property type="evidence" value="ECO:0000314"/>
    <property type="project" value="MGI"/>
</dbReference>
<dbReference type="GO" id="GO:0003677">
    <property type="term" value="F:DNA binding"/>
    <property type="evidence" value="ECO:0000250"/>
    <property type="project" value="UniProtKB"/>
</dbReference>
<dbReference type="GO" id="GO:0003700">
    <property type="term" value="F:DNA-binding transcription factor activity"/>
    <property type="evidence" value="ECO:0000250"/>
    <property type="project" value="UniProtKB"/>
</dbReference>
<dbReference type="GO" id="GO:0000976">
    <property type="term" value="F:transcription cis-regulatory region binding"/>
    <property type="evidence" value="ECO:0000314"/>
    <property type="project" value="MGI"/>
</dbReference>
<dbReference type="GO" id="GO:0008283">
    <property type="term" value="P:cell population proliferation"/>
    <property type="evidence" value="ECO:0000315"/>
    <property type="project" value="MGI"/>
</dbReference>
<dbReference type="GO" id="GO:0030330">
    <property type="term" value="P:DNA damage response, signal transduction by p53 class mediator"/>
    <property type="evidence" value="ECO:0000315"/>
    <property type="project" value="UniProtKB"/>
</dbReference>
<dbReference type="GO" id="GO:0006281">
    <property type="term" value="P:DNA repair"/>
    <property type="evidence" value="ECO:0007669"/>
    <property type="project" value="UniProtKB-KW"/>
</dbReference>
<dbReference type="GO" id="GO:0000086">
    <property type="term" value="P:G2/M transition of mitotic cell cycle"/>
    <property type="evidence" value="ECO:0000250"/>
    <property type="project" value="UniProtKB"/>
</dbReference>
<dbReference type="GO" id="GO:0001889">
    <property type="term" value="P:liver development"/>
    <property type="evidence" value="ECO:0000315"/>
    <property type="project" value="MGI"/>
</dbReference>
<dbReference type="GO" id="GO:0045893">
    <property type="term" value="P:positive regulation of DNA-templated transcription"/>
    <property type="evidence" value="ECO:0000315"/>
    <property type="project" value="UniProtKB"/>
</dbReference>
<dbReference type="GO" id="GO:2000781">
    <property type="term" value="P:positive regulation of double-strand break repair"/>
    <property type="evidence" value="ECO:0000315"/>
    <property type="project" value="UniProtKB"/>
</dbReference>
<dbReference type="GO" id="GO:2000648">
    <property type="term" value="P:positive regulation of stem cell proliferation"/>
    <property type="evidence" value="ECO:0000315"/>
    <property type="project" value="MGI"/>
</dbReference>
<dbReference type="GO" id="GO:0045944">
    <property type="term" value="P:positive regulation of transcription by RNA polymerase II"/>
    <property type="evidence" value="ECO:0000314"/>
    <property type="project" value="MGI"/>
</dbReference>
<dbReference type="GO" id="GO:0042127">
    <property type="term" value="P:regulation of cell population proliferation"/>
    <property type="evidence" value="ECO:0000315"/>
    <property type="project" value="MGI"/>
</dbReference>
<dbReference type="GO" id="GO:0072089">
    <property type="term" value="P:stem cell proliferation"/>
    <property type="evidence" value="ECO:0000315"/>
    <property type="project" value="MGI"/>
</dbReference>
<dbReference type="GO" id="GO:0001570">
    <property type="term" value="P:vasculogenesis"/>
    <property type="evidence" value="ECO:0000315"/>
    <property type="project" value="MGI"/>
</dbReference>
<dbReference type="CDD" id="cd20029">
    <property type="entry name" value="FH_FOXM"/>
    <property type="match status" value="1"/>
</dbReference>
<dbReference type="FunFam" id="1.10.10.10:FF:000245">
    <property type="entry name" value="forkhead box protein M1 isoform X2"/>
    <property type="match status" value="1"/>
</dbReference>
<dbReference type="Gene3D" id="1.10.10.10">
    <property type="entry name" value="Winged helix-like DNA-binding domain superfamily/Winged helix DNA-binding domain"/>
    <property type="match status" value="1"/>
</dbReference>
<dbReference type="InterPro" id="IPR047516">
    <property type="entry name" value="FH_FOXM1"/>
</dbReference>
<dbReference type="InterPro" id="IPR001766">
    <property type="entry name" value="Fork_head_dom"/>
</dbReference>
<dbReference type="InterPro" id="IPR042839">
    <property type="entry name" value="FOXM1"/>
</dbReference>
<dbReference type="InterPro" id="IPR018122">
    <property type="entry name" value="TF_fork_head_CS_1"/>
</dbReference>
<dbReference type="InterPro" id="IPR030456">
    <property type="entry name" value="TF_fork_head_CS_2"/>
</dbReference>
<dbReference type="InterPro" id="IPR036388">
    <property type="entry name" value="WH-like_DNA-bd_sf"/>
</dbReference>
<dbReference type="InterPro" id="IPR036390">
    <property type="entry name" value="WH_DNA-bd_sf"/>
</dbReference>
<dbReference type="PANTHER" id="PTHR46878">
    <property type="entry name" value="FORKHEAD BOX PROTEIN M1"/>
    <property type="match status" value="1"/>
</dbReference>
<dbReference type="PANTHER" id="PTHR46878:SF1">
    <property type="entry name" value="FORKHEAD BOX PROTEIN M1"/>
    <property type="match status" value="1"/>
</dbReference>
<dbReference type="Pfam" id="PF00250">
    <property type="entry name" value="Forkhead"/>
    <property type="match status" value="1"/>
</dbReference>
<dbReference type="PRINTS" id="PR00053">
    <property type="entry name" value="FORKHEAD"/>
</dbReference>
<dbReference type="SMART" id="SM00339">
    <property type="entry name" value="FH"/>
    <property type="match status" value="1"/>
</dbReference>
<dbReference type="SUPFAM" id="SSF46785">
    <property type="entry name" value="Winged helix' DNA-binding domain"/>
    <property type="match status" value="1"/>
</dbReference>
<dbReference type="PROSITE" id="PS00657">
    <property type="entry name" value="FORK_HEAD_1"/>
    <property type="match status" value="1"/>
</dbReference>
<dbReference type="PROSITE" id="PS00658">
    <property type="entry name" value="FORK_HEAD_2"/>
    <property type="match status" value="1"/>
</dbReference>
<dbReference type="PROSITE" id="PS50039">
    <property type="entry name" value="FORK_HEAD_3"/>
    <property type="match status" value="1"/>
</dbReference>
<reference key="1">
    <citation type="journal article" date="1997" name="Nucleic Acids Res.">
        <title>The winged-helix transcription factor Trident is expressed in cycling cells.</title>
        <authorList>
            <person name="Korver W."/>
            <person name="Roose J."/>
            <person name="Clevers H."/>
        </authorList>
    </citation>
    <scope>NUCLEOTIDE SEQUENCE [MRNA]</scope>
    <source>
        <tissue>Thymus</tissue>
    </source>
</reference>
<reference key="2">
    <citation type="journal article" date="2007" name="Mol. Cell. Biol.">
        <title>Chk2 mediates stabilization of the FoxM1 transcription factor to stimulate expression of DNA repair genes.</title>
        <authorList>
            <person name="Tan Y."/>
            <person name="Raychaudhuri P."/>
            <person name="Costa R.H."/>
        </authorList>
    </citation>
    <scope>FUNCTION IN DNA REPAIR</scope>
</reference>
<reference key="3">
    <citation type="journal article" date="2010" name="Cell">
        <title>A tissue-specific atlas of mouse protein phosphorylation and expression.</title>
        <authorList>
            <person name="Huttlin E.L."/>
            <person name="Jedrychowski M.P."/>
            <person name="Elias J.E."/>
            <person name="Goswami T."/>
            <person name="Rad R."/>
            <person name="Beausoleil S.A."/>
            <person name="Villen J."/>
            <person name="Haas W."/>
            <person name="Sowa M.E."/>
            <person name="Gygi S.P."/>
        </authorList>
    </citation>
    <scope>IDENTIFICATION BY MASS SPECTROMETRY [LARGE SCALE ANALYSIS]</scope>
    <source>
        <tissue>Lung</tissue>
        <tissue>Spleen</tissue>
    </source>
</reference>
<name>FOXM1_MOUSE</name>
<keyword id="KW-0010">Activator</keyword>
<keyword id="KW-0131">Cell cycle</keyword>
<keyword id="KW-0227">DNA damage</keyword>
<keyword id="KW-0234">DNA repair</keyword>
<keyword id="KW-0238">DNA-binding</keyword>
<keyword id="KW-1017">Isopeptide bond</keyword>
<keyword id="KW-0539">Nucleus</keyword>
<keyword id="KW-0597">Phosphoprotein</keyword>
<keyword id="KW-1185">Reference proteome</keyword>
<keyword id="KW-0804">Transcription</keyword>
<keyword id="KW-0805">Transcription regulation</keyword>
<keyword id="KW-0832">Ubl conjugation</keyword>
<comment type="function">
    <text evidence="1 4">Transcription factor regulating the expression of cell cycle genes essential for DNA replication and mitosis (By similarity). Plays a role in the control of cell proliferation (By similarity). Also plays a role in DNA break repair, participating in the DNA damage checkpoint response (PubMed:17101782). Promotes transcription of PHB2 (By similarity).</text>
</comment>
<comment type="subcellular location">
    <subcellularLocation>
        <location evidence="2">Nucleus</location>
    </subcellularLocation>
</comment>
<comment type="tissue specificity">
    <text>Expressed in fetal heart, brain, liver, lung, kidney and limb, but only in adult thymus. Appears to be expressed only in adult organs containing proliferating/cycling cells or in response to growth factors.</text>
</comment>
<comment type="developmental stage">
    <text>Expressed at 14 dpc in the embryo.</text>
</comment>
<comment type="PTM">
    <text evidence="1">Phosphorylated in M (mitotic) phase. Phosphorylation by the checkpoint kinase CHEK2 in response to DNA damage increases the FOXM1 protein stability probably stimulating the transcription of genes involved in DNA repair. Phosphorylated by CDK1 in late S and G2 phases, creating docking sites for the POLO box domains of PLK1. Subsequently, PLK1 binds and phosphorylates FOXM1, leading to activation of transcriptional activity and subsequent enhanced expression of key mitotic regulators (By similarity). Phosphorylated by GSK3B leading to ubiquitination and proteasomal degradation (By similarity).</text>
</comment>
<comment type="sequence caution" evidence="5">
    <conflict type="erroneous termination">
        <sequence resource="EMBL-CDS" id="CAA72115"/>
    </conflict>
    <text>Truncated C-terminus.</text>
</comment>
<accession>O08696</accession>
<feature type="chain" id="PRO_0000091864" description="Forkhead box protein M1">
    <location>
        <begin position="1"/>
        <end position="760"/>
    </location>
</feature>
<feature type="DNA-binding region" description="Fork-head" evidence="2">
    <location>
        <begin position="233"/>
        <end position="325"/>
    </location>
</feature>
<feature type="region of interest" description="Disordered" evidence="3">
    <location>
        <begin position="1"/>
        <end position="54"/>
    </location>
</feature>
<feature type="region of interest" description="Disordered" evidence="3">
    <location>
        <begin position="95"/>
        <end position="167"/>
    </location>
</feature>
<feature type="region of interest" description="Disordered" evidence="3">
    <location>
        <begin position="323"/>
        <end position="348"/>
    </location>
</feature>
<feature type="region of interest" description="Disordered" evidence="3">
    <location>
        <begin position="500"/>
        <end position="560"/>
    </location>
</feature>
<feature type="region of interest" description="Disordered" evidence="3">
    <location>
        <begin position="577"/>
        <end position="635"/>
    </location>
</feature>
<feature type="region of interest" description="Disordered" evidence="3">
    <location>
        <begin position="660"/>
        <end position="709"/>
    </location>
</feature>
<feature type="compositionally biased region" description="Low complexity" evidence="3">
    <location>
        <begin position="43"/>
        <end position="54"/>
    </location>
</feature>
<feature type="compositionally biased region" description="Low complexity" evidence="3">
    <location>
        <begin position="110"/>
        <end position="124"/>
    </location>
</feature>
<feature type="compositionally biased region" description="Basic and acidic residues" evidence="3">
    <location>
        <begin position="125"/>
        <end position="134"/>
    </location>
</feature>
<feature type="compositionally biased region" description="Low complexity" evidence="3">
    <location>
        <begin position="140"/>
        <end position="149"/>
    </location>
</feature>
<feature type="compositionally biased region" description="Basic and acidic residues" evidence="3">
    <location>
        <begin position="334"/>
        <end position="348"/>
    </location>
</feature>
<feature type="compositionally biased region" description="Basic and acidic residues" evidence="3">
    <location>
        <begin position="531"/>
        <end position="542"/>
    </location>
</feature>
<feature type="compositionally biased region" description="Polar residues" evidence="3">
    <location>
        <begin position="604"/>
        <end position="613"/>
    </location>
</feature>
<feature type="modified residue" description="Phosphoserine" evidence="1">
    <location>
        <position position="329"/>
    </location>
</feature>
<feature type="modified residue" description="Phosphoserine; by CHEK2" evidence="1">
    <location>
        <position position="374"/>
    </location>
</feature>
<feature type="modified residue" description="Phosphoserine" evidence="1">
    <location>
        <position position="521"/>
    </location>
</feature>
<feature type="modified residue" description="Phosphothreonine; by CDK1" evidence="1">
    <location>
        <position position="608"/>
    </location>
</feature>
<feature type="modified residue" description="Phosphothreonine" evidence="1">
    <location>
        <position position="624"/>
    </location>
</feature>
<feature type="modified residue" description="Phosphoserine; by PLK1" evidence="1">
    <location>
        <position position="727"/>
    </location>
</feature>
<feature type="modified residue" description="Phosphoserine; by PLK1" evidence="1">
    <location>
        <position position="736"/>
    </location>
</feature>
<feature type="cross-link" description="Glycyl lysine isopeptide (Lys-Gly) (interchain with G-Cter in SUMO2)" evidence="1">
    <location>
        <position position="199"/>
    </location>
</feature>
<feature type="cross-link" description="Glycyl lysine isopeptide (Lys-Gly) (interchain with G-Cter in SUMO2)" evidence="1">
    <location>
        <position position="323"/>
    </location>
</feature>
<feature type="cross-link" description="Glycyl lysine isopeptide (Lys-Gly) (interchain with G-Cter in SUMO2)" evidence="1">
    <location>
        <position position="354"/>
    </location>
</feature>
<feature type="cross-link" description="Glycyl lysine isopeptide (Lys-Gly) (interchain with G-Cter in SUMO2)" evidence="1">
    <location>
        <position position="420"/>
    </location>
</feature>
<feature type="cross-link" description="Glycyl lysine isopeptide (Lys-Gly) (interchain with G-Cter in SUMO2)" evidence="1">
    <location>
        <position position="438"/>
    </location>
</feature>
<protein>
    <recommendedName>
        <fullName>Forkhead box protein M1</fullName>
    </recommendedName>
    <alternativeName>
        <fullName>Forkhead homolog 16</fullName>
    </alternativeName>
    <alternativeName>
        <fullName>Winged-helix transcription factor Trident</fullName>
    </alternativeName>
</protein>
<gene>
    <name type="primary">Foxm1</name>
    <name type="synonym">Fkh16</name>
</gene>
<organism>
    <name type="scientific">Mus musculus</name>
    <name type="common">Mouse</name>
    <dbReference type="NCBI Taxonomy" id="10090"/>
    <lineage>
        <taxon>Eukaryota</taxon>
        <taxon>Metazoa</taxon>
        <taxon>Chordata</taxon>
        <taxon>Craniata</taxon>
        <taxon>Vertebrata</taxon>
        <taxon>Euteleostomi</taxon>
        <taxon>Mammalia</taxon>
        <taxon>Eutheria</taxon>
        <taxon>Euarchontoglires</taxon>
        <taxon>Glires</taxon>
        <taxon>Rodentia</taxon>
        <taxon>Myomorpha</taxon>
        <taxon>Muroidea</taxon>
        <taxon>Muridae</taxon>
        <taxon>Murinae</taxon>
        <taxon>Mus</taxon>
        <taxon>Mus</taxon>
    </lineage>
</organism>